<accession>B1I8M1</accession>
<proteinExistence type="inferred from homology"/>
<sequence length="38" mass="4421">MKVRPSVKPICEYCKVIRRNGRVMVICPANPKHKQRQG</sequence>
<gene>
    <name evidence="1" type="primary">rpmJ</name>
    <name type="ordered locus">SPH_0346</name>
</gene>
<comment type="similarity">
    <text evidence="1">Belongs to the bacterial ribosomal protein bL36 family.</text>
</comment>
<evidence type="ECO:0000255" key="1">
    <source>
        <dbReference type="HAMAP-Rule" id="MF_00251"/>
    </source>
</evidence>
<evidence type="ECO:0000305" key="2"/>
<protein>
    <recommendedName>
        <fullName evidence="1">Large ribosomal subunit protein bL36</fullName>
    </recommendedName>
    <alternativeName>
        <fullName evidence="2">50S ribosomal protein L36</fullName>
    </alternativeName>
</protein>
<reference key="1">
    <citation type="journal article" date="2010" name="Genome Biol.">
        <title>Structure and dynamics of the pan-genome of Streptococcus pneumoniae and closely related species.</title>
        <authorList>
            <person name="Donati C."/>
            <person name="Hiller N.L."/>
            <person name="Tettelin H."/>
            <person name="Muzzi A."/>
            <person name="Croucher N.J."/>
            <person name="Angiuoli S.V."/>
            <person name="Oggioni M."/>
            <person name="Dunning Hotopp J.C."/>
            <person name="Hu F.Z."/>
            <person name="Riley D.R."/>
            <person name="Covacci A."/>
            <person name="Mitchell T.J."/>
            <person name="Bentley S.D."/>
            <person name="Kilian M."/>
            <person name="Ehrlich G.D."/>
            <person name="Rappuoli R."/>
            <person name="Moxon E.R."/>
            <person name="Masignani V."/>
        </authorList>
    </citation>
    <scope>NUCLEOTIDE SEQUENCE [LARGE SCALE GENOMIC DNA]</scope>
    <source>
        <strain>Hungary19A-6</strain>
    </source>
</reference>
<name>RL36_STRPI</name>
<dbReference type="EMBL" id="CP000936">
    <property type="protein sequence ID" value="ACA36922.1"/>
    <property type="molecule type" value="Genomic_DNA"/>
</dbReference>
<dbReference type="RefSeq" id="WP_001808836.1">
    <property type="nucleotide sequence ID" value="NC_010380.1"/>
</dbReference>
<dbReference type="SMR" id="B1I8M1"/>
<dbReference type="GeneID" id="93964224"/>
<dbReference type="KEGG" id="spv:SPH_0346"/>
<dbReference type="HOGENOM" id="CLU_135723_6_2_9"/>
<dbReference type="Proteomes" id="UP000002163">
    <property type="component" value="Chromosome"/>
</dbReference>
<dbReference type="GO" id="GO:0005737">
    <property type="term" value="C:cytoplasm"/>
    <property type="evidence" value="ECO:0007669"/>
    <property type="project" value="UniProtKB-ARBA"/>
</dbReference>
<dbReference type="GO" id="GO:1990904">
    <property type="term" value="C:ribonucleoprotein complex"/>
    <property type="evidence" value="ECO:0007669"/>
    <property type="project" value="UniProtKB-KW"/>
</dbReference>
<dbReference type="GO" id="GO:0005840">
    <property type="term" value="C:ribosome"/>
    <property type="evidence" value="ECO:0007669"/>
    <property type="project" value="UniProtKB-KW"/>
</dbReference>
<dbReference type="GO" id="GO:0003735">
    <property type="term" value="F:structural constituent of ribosome"/>
    <property type="evidence" value="ECO:0007669"/>
    <property type="project" value="InterPro"/>
</dbReference>
<dbReference type="GO" id="GO:0006412">
    <property type="term" value="P:translation"/>
    <property type="evidence" value="ECO:0007669"/>
    <property type="project" value="UniProtKB-UniRule"/>
</dbReference>
<dbReference type="HAMAP" id="MF_00251">
    <property type="entry name" value="Ribosomal_bL36"/>
    <property type="match status" value="1"/>
</dbReference>
<dbReference type="InterPro" id="IPR000473">
    <property type="entry name" value="Ribosomal_bL36"/>
</dbReference>
<dbReference type="InterPro" id="IPR035977">
    <property type="entry name" value="Ribosomal_bL36_sp"/>
</dbReference>
<dbReference type="NCBIfam" id="TIGR01022">
    <property type="entry name" value="rpmJ_bact"/>
    <property type="match status" value="1"/>
</dbReference>
<dbReference type="PANTHER" id="PTHR42888">
    <property type="entry name" value="50S RIBOSOMAL PROTEIN L36, CHLOROPLASTIC"/>
    <property type="match status" value="1"/>
</dbReference>
<dbReference type="PANTHER" id="PTHR42888:SF1">
    <property type="entry name" value="LARGE RIBOSOMAL SUBUNIT PROTEIN BL36C"/>
    <property type="match status" value="1"/>
</dbReference>
<dbReference type="Pfam" id="PF00444">
    <property type="entry name" value="Ribosomal_L36"/>
    <property type="match status" value="1"/>
</dbReference>
<dbReference type="SUPFAM" id="SSF57840">
    <property type="entry name" value="Ribosomal protein L36"/>
    <property type="match status" value="1"/>
</dbReference>
<dbReference type="PROSITE" id="PS00828">
    <property type="entry name" value="RIBOSOMAL_L36"/>
    <property type="match status" value="1"/>
</dbReference>
<organism>
    <name type="scientific">Streptococcus pneumoniae (strain Hungary19A-6)</name>
    <dbReference type="NCBI Taxonomy" id="487214"/>
    <lineage>
        <taxon>Bacteria</taxon>
        <taxon>Bacillati</taxon>
        <taxon>Bacillota</taxon>
        <taxon>Bacilli</taxon>
        <taxon>Lactobacillales</taxon>
        <taxon>Streptococcaceae</taxon>
        <taxon>Streptococcus</taxon>
    </lineage>
</organism>
<feature type="chain" id="PRO_1000101075" description="Large ribosomal subunit protein bL36">
    <location>
        <begin position="1"/>
        <end position="38"/>
    </location>
</feature>
<keyword id="KW-0687">Ribonucleoprotein</keyword>
<keyword id="KW-0689">Ribosomal protein</keyword>